<dbReference type="EMBL" id="AP009049">
    <property type="protein sequence ID" value="BAH05694.1"/>
    <property type="molecule type" value="Genomic_DNA"/>
</dbReference>
<dbReference type="RefSeq" id="WP_011989289.1">
    <property type="nucleotide sequence ID" value="NC_011837.1"/>
</dbReference>
<dbReference type="KEGG" id="ckr:CKR_0643"/>
<dbReference type="HOGENOM" id="CLU_019250_2_2_9"/>
<dbReference type="UniPathway" id="UPA00148"/>
<dbReference type="Proteomes" id="UP000007969">
    <property type="component" value="Chromosome"/>
</dbReference>
<dbReference type="GO" id="GO:0015420">
    <property type="term" value="F:ABC-type vitamin B12 transporter activity"/>
    <property type="evidence" value="ECO:0007669"/>
    <property type="project" value="UniProtKB-UniRule"/>
</dbReference>
<dbReference type="GO" id="GO:0003824">
    <property type="term" value="F:catalytic activity"/>
    <property type="evidence" value="ECO:0007669"/>
    <property type="project" value="InterPro"/>
</dbReference>
<dbReference type="GO" id="GO:0009236">
    <property type="term" value="P:cobalamin biosynthetic process"/>
    <property type="evidence" value="ECO:0007669"/>
    <property type="project" value="UniProtKB-UniRule"/>
</dbReference>
<dbReference type="CDD" id="cd05389">
    <property type="entry name" value="CobQ_N"/>
    <property type="match status" value="1"/>
</dbReference>
<dbReference type="CDD" id="cd01750">
    <property type="entry name" value="GATase1_CobQ"/>
    <property type="match status" value="1"/>
</dbReference>
<dbReference type="Gene3D" id="3.40.50.880">
    <property type="match status" value="1"/>
</dbReference>
<dbReference type="Gene3D" id="3.40.50.300">
    <property type="entry name" value="P-loop containing nucleotide triphosphate hydrolases"/>
    <property type="match status" value="1"/>
</dbReference>
<dbReference type="HAMAP" id="MF_00028">
    <property type="entry name" value="CobQ"/>
    <property type="match status" value="1"/>
</dbReference>
<dbReference type="InterPro" id="IPR029062">
    <property type="entry name" value="Class_I_gatase-like"/>
</dbReference>
<dbReference type="InterPro" id="IPR002586">
    <property type="entry name" value="CobQ/CobB/MinD/ParA_Nub-bd_dom"/>
</dbReference>
<dbReference type="InterPro" id="IPR033949">
    <property type="entry name" value="CobQ_GATase1"/>
</dbReference>
<dbReference type="InterPro" id="IPR047045">
    <property type="entry name" value="CobQ_N"/>
</dbReference>
<dbReference type="InterPro" id="IPR004459">
    <property type="entry name" value="CobQ_synth"/>
</dbReference>
<dbReference type="InterPro" id="IPR011698">
    <property type="entry name" value="GATase_3"/>
</dbReference>
<dbReference type="InterPro" id="IPR027417">
    <property type="entry name" value="P-loop_NTPase"/>
</dbReference>
<dbReference type="NCBIfam" id="TIGR00313">
    <property type="entry name" value="cobQ"/>
    <property type="match status" value="1"/>
</dbReference>
<dbReference type="NCBIfam" id="NF001989">
    <property type="entry name" value="PRK00784.1"/>
    <property type="match status" value="1"/>
</dbReference>
<dbReference type="PANTHER" id="PTHR21343:SF1">
    <property type="entry name" value="COBYRIC ACID SYNTHASE"/>
    <property type="match status" value="1"/>
</dbReference>
<dbReference type="PANTHER" id="PTHR21343">
    <property type="entry name" value="DETHIOBIOTIN SYNTHETASE"/>
    <property type="match status" value="1"/>
</dbReference>
<dbReference type="Pfam" id="PF01656">
    <property type="entry name" value="CbiA"/>
    <property type="match status" value="1"/>
</dbReference>
<dbReference type="Pfam" id="PF07685">
    <property type="entry name" value="GATase_3"/>
    <property type="match status" value="1"/>
</dbReference>
<dbReference type="SUPFAM" id="SSF52317">
    <property type="entry name" value="Class I glutamine amidotransferase-like"/>
    <property type="match status" value="1"/>
</dbReference>
<dbReference type="SUPFAM" id="SSF52540">
    <property type="entry name" value="P-loop containing nucleoside triphosphate hydrolases"/>
    <property type="match status" value="1"/>
</dbReference>
<dbReference type="PROSITE" id="PS51274">
    <property type="entry name" value="GATASE_COBBQ"/>
    <property type="match status" value="1"/>
</dbReference>
<evidence type="ECO:0000255" key="1">
    <source>
        <dbReference type="HAMAP-Rule" id="MF_00028"/>
    </source>
</evidence>
<comment type="function">
    <text evidence="1">Catalyzes amidations at positions B, D, E, and G on adenosylcobyrinic A,C-diamide. NH(2) groups are provided by glutamine, and one molecule of ATP is hydrogenolyzed for each amidation.</text>
</comment>
<comment type="pathway">
    <text evidence="1">Cofactor biosynthesis; adenosylcobalamin biosynthesis.</text>
</comment>
<comment type="similarity">
    <text evidence="1">Belongs to the CobB/CobQ family. CobQ subfamily.</text>
</comment>
<keyword id="KW-0169">Cobalamin biosynthesis</keyword>
<keyword id="KW-0315">Glutamine amidotransferase</keyword>
<sequence>MPKIMIQGTASSVGKSIIVAALCRIFKQDGFKVCPYKSQNMSLNSYITLDGREMGRAQVLQAYASGLEPEVYMNPILLKPTTDKNCQVIIRGEVYCNSSAREYYNMKKEFVPMLKKDFEILEDKFDIVVIEGAGSPAEINLRDNDIVNMGLAEMVDSPVILVGDIDKGGVFASLLGTIMLLTEKEKSRVKGTIINKFRGDVDILKPGLSMIEEKIKVPSIGVIPYFRLALEDEDSAVDFNTKISAPIDIAIIKLPHISNFTDMDPLKIEEDVSLRYVTSADDFGNPDLLIIPGSKNTIEDLLYIRKVGIEDKIKKYSSRDGFIFGICGGYQMLGTYIEDPLGVETKVKAVEGMNILDVSTVFAKEKITTRVKGKVCGLTENIDIYGYEIHMGSCNYGKKAKPLVEITDKNGCSCNFKEGAINPGRNVMGTYIHGIFDGAELRQYIMNTLRSRRGIKHKNSKVYENLRDGEIDKLADIVRSSLDMKKVYEILNVKSKFME</sequence>
<gene>
    <name evidence="1" type="primary">cobQ</name>
    <name type="ordered locus">CKR_0643</name>
</gene>
<proteinExistence type="inferred from homology"/>
<reference key="1">
    <citation type="submission" date="2005-09" db="EMBL/GenBank/DDBJ databases">
        <title>Complete genome sequence of Clostridium kluyveri and comparative genomics of Clostridia species.</title>
        <authorList>
            <person name="Inui M."/>
            <person name="Nonaka H."/>
            <person name="Shinoda Y."/>
            <person name="Ikenaga Y."/>
            <person name="Abe M."/>
            <person name="Naito K."/>
            <person name="Vertes A.A."/>
            <person name="Yukawa H."/>
        </authorList>
    </citation>
    <scope>NUCLEOTIDE SEQUENCE [LARGE SCALE GENOMIC DNA]</scope>
    <source>
        <strain>NBRC 12016</strain>
    </source>
</reference>
<feature type="chain" id="PRO_1000116903" description="Cobyric acid synthase">
    <location>
        <begin position="1"/>
        <end position="499"/>
    </location>
</feature>
<feature type="domain" description="GATase cobBQ-type" evidence="1">
    <location>
        <begin position="246"/>
        <end position="441"/>
    </location>
</feature>
<feature type="active site" description="Nucleophile" evidence="1">
    <location>
        <position position="327"/>
    </location>
</feature>
<feature type="active site" evidence="1">
    <location>
        <position position="433"/>
    </location>
</feature>
<accession>B9DZL9</accession>
<organism>
    <name type="scientific">Clostridium kluyveri (strain NBRC 12016)</name>
    <dbReference type="NCBI Taxonomy" id="583346"/>
    <lineage>
        <taxon>Bacteria</taxon>
        <taxon>Bacillati</taxon>
        <taxon>Bacillota</taxon>
        <taxon>Clostridia</taxon>
        <taxon>Eubacteriales</taxon>
        <taxon>Clostridiaceae</taxon>
        <taxon>Clostridium</taxon>
    </lineage>
</organism>
<protein>
    <recommendedName>
        <fullName evidence="1">Cobyric acid synthase</fullName>
    </recommendedName>
</protein>
<name>COBQ_CLOK1</name>